<comment type="function">
    <text evidence="1">Binds together with bS18 to 16S ribosomal RNA.</text>
</comment>
<comment type="similarity">
    <text evidence="1">Belongs to the bacterial ribosomal protein bS6 family.</text>
</comment>
<gene>
    <name evidence="1" type="primary">rpsF</name>
    <name type="ordered locus">Bcep1808_1800</name>
</gene>
<protein>
    <recommendedName>
        <fullName evidence="1">Small ribosomal subunit protein bS6</fullName>
    </recommendedName>
    <alternativeName>
        <fullName evidence="3">30S ribosomal protein S6</fullName>
    </alternativeName>
</protein>
<proteinExistence type="inferred from homology"/>
<reference key="1">
    <citation type="submission" date="2007-03" db="EMBL/GenBank/DDBJ databases">
        <title>Complete sequence of chromosome 1 of Burkholderia vietnamiensis G4.</title>
        <authorList>
            <consortium name="US DOE Joint Genome Institute"/>
            <person name="Copeland A."/>
            <person name="Lucas S."/>
            <person name="Lapidus A."/>
            <person name="Barry K."/>
            <person name="Detter J.C."/>
            <person name="Glavina del Rio T."/>
            <person name="Hammon N."/>
            <person name="Israni S."/>
            <person name="Dalin E."/>
            <person name="Tice H."/>
            <person name="Pitluck S."/>
            <person name="Chain P."/>
            <person name="Malfatti S."/>
            <person name="Shin M."/>
            <person name="Vergez L."/>
            <person name="Schmutz J."/>
            <person name="Larimer F."/>
            <person name="Land M."/>
            <person name="Hauser L."/>
            <person name="Kyrpides N."/>
            <person name="Tiedje J."/>
            <person name="Richardson P."/>
        </authorList>
    </citation>
    <scope>NUCLEOTIDE SEQUENCE [LARGE SCALE GENOMIC DNA]</scope>
    <source>
        <strain>G4 / LMG 22486</strain>
    </source>
</reference>
<organism>
    <name type="scientific">Burkholderia vietnamiensis (strain G4 / LMG 22486)</name>
    <name type="common">Burkholderia cepacia (strain R1808)</name>
    <dbReference type="NCBI Taxonomy" id="269482"/>
    <lineage>
        <taxon>Bacteria</taxon>
        <taxon>Pseudomonadati</taxon>
        <taxon>Pseudomonadota</taxon>
        <taxon>Betaproteobacteria</taxon>
        <taxon>Burkholderiales</taxon>
        <taxon>Burkholderiaceae</taxon>
        <taxon>Burkholderia</taxon>
        <taxon>Burkholderia cepacia complex</taxon>
    </lineage>
</organism>
<sequence length="124" mass="14335">MRHYEIVFIVHPDQSEQVPAMIERYKTTITTHGGQIHRVEDWGRRQLAYMIEKLAKAHYVCMNIECDQTTLDELEHAFKFNDAVLRHLIVKMKKAETGPSPMMKEVQREEAKKAAAAQPTEAQA</sequence>
<evidence type="ECO:0000255" key="1">
    <source>
        <dbReference type="HAMAP-Rule" id="MF_00360"/>
    </source>
</evidence>
<evidence type="ECO:0000256" key="2">
    <source>
        <dbReference type="SAM" id="MobiDB-lite"/>
    </source>
</evidence>
<evidence type="ECO:0000305" key="3"/>
<name>RS6_BURVG</name>
<feature type="chain" id="PRO_1000005235" description="Small ribosomal subunit protein bS6">
    <location>
        <begin position="1"/>
        <end position="124"/>
    </location>
</feature>
<feature type="region of interest" description="Disordered" evidence="2">
    <location>
        <begin position="96"/>
        <end position="124"/>
    </location>
</feature>
<feature type="compositionally biased region" description="Low complexity" evidence="2">
    <location>
        <begin position="114"/>
        <end position="124"/>
    </location>
</feature>
<keyword id="KW-0687">Ribonucleoprotein</keyword>
<keyword id="KW-0689">Ribosomal protein</keyword>
<keyword id="KW-0694">RNA-binding</keyword>
<keyword id="KW-0699">rRNA-binding</keyword>
<accession>A4JEV1</accession>
<dbReference type="EMBL" id="CP000614">
    <property type="protein sequence ID" value="ABO54804.1"/>
    <property type="molecule type" value="Genomic_DNA"/>
</dbReference>
<dbReference type="SMR" id="A4JEV1"/>
<dbReference type="KEGG" id="bvi:Bcep1808_1800"/>
<dbReference type="eggNOG" id="COG0360">
    <property type="taxonomic scope" value="Bacteria"/>
</dbReference>
<dbReference type="HOGENOM" id="CLU_113441_6_1_4"/>
<dbReference type="Proteomes" id="UP000002287">
    <property type="component" value="Chromosome 1"/>
</dbReference>
<dbReference type="GO" id="GO:0022627">
    <property type="term" value="C:cytosolic small ribosomal subunit"/>
    <property type="evidence" value="ECO:0007669"/>
    <property type="project" value="TreeGrafter"/>
</dbReference>
<dbReference type="GO" id="GO:0070181">
    <property type="term" value="F:small ribosomal subunit rRNA binding"/>
    <property type="evidence" value="ECO:0007669"/>
    <property type="project" value="TreeGrafter"/>
</dbReference>
<dbReference type="GO" id="GO:0003735">
    <property type="term" value="F:structural constituent of ribosome"/>
    <property type="evidence" value="ECO:0007669"/>
    <property type="project" value="InterPro"/>
</dbReference>
<dbReference type="GO" id="GO:0006412">
    <property type="term" value="P:translation"/>
    <property type="evidence" value="ECO:0007669"/>
    <property type="project" value="UniProtKB-UniRule"/>
</dbReference>
<dbReference type="CDD" id="cd00473">
    <property type="entry name" value="bS6"/>
    <property type="match status" value="1"/>
</dbReference>
<dbReference type="Gene3D" id="3.30.70.60">
    <property type="match status" value="1"/>
</dbReference>
<dbReference type="HAMAP" id="MF_00360">
    <property type="entry name" value="Ribosomal_bS6"/>
    <property type="match status" value="1"/>
</dbReference>
<dbReference type="InterPro" id="IPR000529">
    <property type="entry name" value="Ribosomal_bS6"/>
</dbReference>
<dbReference type="InterPro" id="IPR035980">
    <property type="entry name" value="Ribosomal_bS6_sf"/>
</dbReference>
<dbReference type="InterPro" id="IPR020814">
    <property type="entry name" value="Ribosomal_S6_plastid/chlpt"/>
</dbReference>
<dbReference type="InterPro" id="IPR014717">
    <property type="entry name" value="Transl_elong_EF1B/ribsomal_bS6"/>
</dbReference>
<dbReference type="NCBIfam" id="TIGR00166">
    <property type="entry name" value="S6"/>
    <property type="match status" value="1"/>
</dbReference>
<dbReference type="PANTHER" id="PTHR21011">
    <property type="entry name" value="MITOCHONDRIAL 28S RIBOSOMAL PROTEIN S6"/>
    <property type="match status" value="1"/>
</dbReference>
<dbReference type="PANTHER" id="PTHR21011:SF1">
    <property type="entry name" value="SMALL RIBOSOMAL SUBUNIT PROTEIN BS6M"/>
    <property type="match status" value="1"/>
</dbReference>
<dbReference type="Pfam" id="PF01250">
    <property type="entry name" value="Ribosomal_S6"/>
    <property type="match status" value="1"/>
</dbReference>
<dbReference type="SUPFAM" id="SSF54995">
    <property type="entry name" value="Ribosomal protein S6"/>
    <property type="match status" value="1"/>
</dbReference>